<accession>B9LL90</accession>
<proteinExistence type="inferred from homology"/>
<name>RPOC_CHLSY</name>
<organism>
    <name type="scientific">Chloroflexus aurantiacus (strain ATCC 29364 / DSM 637 / Y-400-fl)</name>
    <dbReference type="NCBI Taxonomy" id="480224"/>
    <lineage>
        <taxon>Bacteria</taxon>
        <taxon>Bacillati</taxon>
        <taxon>Chloroflexota</taxon>
        <taxon>Chloroflexia</taxon>
        <taxon>Chloroflexales</taxon>
        <taxon>Chloroflexineae</taxon>
        <taxon>Chloroflexaceae</taxon>
        <taxon>Chloroflexus</taxon>
    </lineage>
</organism>
<comment type="function">
    <text evidence="1">DNA-dependent RNA polymerase catalyzes the transcription of DNA into RNA using the four ribonucleoside triphosphates as substrates.</text>
</comment>
<comment type="catalytic activity">
    <reaction evidence="1">
        <text>RNA(n) + a ribonucleoside 5'-triphosphate = RNA(n+1) + diphosphate</text>
        <dbReference type="Rhea" id="RHEA:21248"/>
        <dbReference type="Rhea" id="RHEA-COMP:14527"/>
        <dbReference type="Rhea" id="RHEA-COMP:17342"/>
        <dbReference type="ChEBI" id="CHEBI:33019"/>
        <dbReference type="ChEBI" id="CHEBI:61557"/>
        <dbReference type="ChEBI" id="CHEBI:140395"/>
        <dbReference type="EC" id="2.7.7.6"/>
    </reaction>
</comment>
<comment type="cofactor">
    <cofactor evidence="1">
        <name>Mg(2+)</name>
        <dbReference type="ChEBI" id="CHEBI:18420"/>
    </cofactor>
    <text evidence="1">Binds 1 Mg(2+) ion per subunit.</text>
</comment>
<comment type="cofactor">
    <cofactor evidence="1">
        <name>Zn(2+)</name>
        <dbReference type="ChEBI" id="CHEBI:29105"/>
    </cofactor>
    <text evidence="1">Binds 2 Zn(2+) ions per subunit.</text>
</comment>
<comment type="subunit">
    <text evidence="1">The RNAP catalytic core consists of 2 alpha, 1 beta, 1 beta' and 1 omega subunit. When a sigma factor is associated with the core the holoenzyme is formed, which can initiate transcription.</text>
</comment>
<comment type="similarity">
    <text evidence="1">Belongs to the RNA polymerase beta' chain family.</text>
</comment>
<sequence>MLEINDFNAIRISLASPEDIRSWSHGEVTKPETINYRTLKPERDGLFCERIFGPTKDWECFCGKYKRVRYKGVVCDKCGVEVTRSKVRRERMGHINLASPVSHIWFVKGTPSRLGLLLDISPRNLERVLYFASYIIVEVKEDMLQVAREMIQEEYAARRQKIQKQAEEKRIELSTQLTQDLGGMETAQRSTQRQIEEEYRRLRDEIASEAEQLRERLEELSGTLADEDILFRGVTVVEEGEPINENTLDQLDELVEQELEVLEERRRRDLADAELLTDAERERKAYEATQEQERLQERLQRELDHLMREEKEKLEQLDTLKVGRIITETEYRQLRDIAPGVFRADMGAGAVRELIEKTVNLDKLAEELQAEIQSSQGQRRKKATKRLRVVEAFRKSGNRPEWMILTVLPVIPPDLRPMVQLDGGRFATSDLNDLYRRVINRNNRLKRLIELNAPEIIVRNEKRMLQEAVDALIDNGRRGRAVSGKGKHRLKSLSDMLKGKQGRFRQNLLGKRVDYSGRSVIVVGPNLQLHQCGLPKKMALELFKPFVMRRLVERGVAHNIKNAKRAVERVRPEVWDALEEVIKDYLVLLNRAPSLHRLSIQAFEAKLIEGSAIQLHPLVCAAFNADFDGDQMAVHVPLSRKAQEEARTRMLSKYNLLSPAHGEPIITPSQDIVLGCYYLTMVRDGAKGSGKRFSSIDEAMLAYEKHLLDIQAPIWIRMTGTLSGKSDRPVRELPLAADGTPRMLIETTIGRILLNNELQPPLRFRNRLIDKKGLKEIIADCYQYYTNLRNLSEDQLNEVRASHGNKHVQELARIYGSEMTAQQADRIKALGFRYATLGGMTIGIEDIEVPAKKYDIVREAEQLVADVEKQFRRGLITEEERYQEVVRIWQEATKQTIQAVKENLNPFGPVAMMSTSGARGNINQISQMAGMRGLMSDPTGRIIELPIKANFREGLSVLDYFVSTHGGRKGLADTALRTADAGYLTRRLVDVAQDVIITIEDCGTEEGLWLHGADDDELMEKLQVRMLGRILAAPIYHKETGELIADRNTEIDEELATAILASGQESVFVRSPLSCQAEHGLCRLCYGRNLATGKLVEIGEAVGIIAAQSIGEPGTQLTLRTFHTGGVASADDITQGLPRVQEIFEARVPKGKALLAEIDGVVQIVRDEEGVRTIRIVSTDVYTDEYPLGRGFSPTINHESEVYEGQVIAEGPGGAQIVTRLTGKAFIQGDRIIVSQEDHQERELVVPHNARIRVENGERVMAGQQLTDGSANPQELLELQGREAVQRYLVNEAQKVYRSQGVNINDKHIEVIVRQMLRRVRIEDPGDTGLLPGELIDSAEFRRLNNDIVSQGGDPATAATMLLGITKASLNTDSFLAAASFQETTRVLTDAAIQGKVDYLRGLKENVVIGKLIPAGTGIEKRIERPHEDLIGEMARMLEESQQAEEAPAETRRATPLPTPNGNKAPESDNDALLRARLEELLSGDGDNDQSDAEEEDNDLPAF</sequence>
<keyword id="KW-0240">DNA-directed RNA polymerase</keyword>
<keyword id="KW-0460">Magnesium</keyword>
<keyword id="KW-0479">Metal-binding</keyword>
<keyword id="KW-0548">Nucleotidyltransferase</keyword>
<keyword id="KW-0804">Transcription</keyword>
<keyword id="KW-0808">Transferase</keyword>
<keyword id="KW-0862">Zinc</keyword>
<dbReference type="EC" id="2.7.7.6" evidence="1"/>
<dbReference type="EMBL" id="CP001364">
    <property type="protein sequence ID" value="ACM52371.1"/>
    <property type="molecule type" value="Genomic_DNA"/>
</dbReference>
<dbReference type="SMR" id="B9LL90"/>
<dbReference type="KEGG" id="chl:Chy400_0948"/>
<dbReference type="HOGENOM" id="CLU_000524_3_1_0"/>
<dbReference type="OrthoDB" id="9815296at2"/>
<dbReference type="GO" id="GO:0000428">
    <property type="term" value="C:DNA-directed RNA polymerase complex"/>
    <property type="evidence" value="ECO:0007669"/>
    <property type="project" value="UniProtKB-KW"/>
</dbReference>
<dbReference type="GO" id="GO:0003677">
    <property type="term" value="F:DNA binding"/>
    <property type="evidence" value="ECO:0007669"/>
    <property type="project" value="UniProtKB-UniRule"/>
</dbReference>
<dbReference type="GO" id="GO:0003899">
    <property type="term" value="F:DNA-directed RNA polymerase activity"/>
    <property type="evidence" value="ECO:0007669"/>
    <property type="project" value="UniProtKB-UniRule"/>
</dbReference>
<dbReference type="GO" id="GO:0000287">
    <property type="term" value="F:magnesium ion binding"/>
    <property type="evidence" value="ECO:0007669"/>
    <property type="project" value="UniProtKB-UniRule"/>
</dbReference>
<dbReference type="GO" id="GO:0008270">
    <property type="term" value="F:zinc ion binding"/>
    <property type="evidence" value="ECO:0007669"/>
    <property type="project" value="UniProtKB-UniRule"/>
</dbReference>
<dbReference type="GO" id="GO:0006351">
    <property type="term" value="P:DNA-templated transcription"/>
    <property type="evidence" value="ECO:0007669"/>
    <property type="project" value="UniProtKB-UniRule"/>
</dbReference>
<dbReference type="CDD" id="cd02655">
    <property type="entry name" value="RNAP_beta'_C"/>
    <property type="match status" value="1"/>
</dbReference>
<dbReference type="CDD" id="cd01609">
    <property type="entry name" value="RNAP_beta'_N"/>
    <property type="match status" value="1"/>
</dbReference>
<dbReference type="FunFam" id="4.10.860.120:FF:000001">
    <property type="entry name" value="DNA-directed RNA polymerase subunit beta"/>
    <property type="match status" value="1"/>
</dbReference>
<dbReference type="Gene3D" id="1.10.132.30">
    <property type="match status" value="1"/>
</dbReference>
<dbReference type="Gene3D" id="1.10.150.390">
    <property type="match status" value="1"/>
</dbReference>
<dbReference type="Gene3D" id="1.10.1790.20">
    <property type="match status" value="1"/>
</dbReference>
<dbReference type="Gene3D" id="1.10.40.90">
    <property type="match status" value="1"/>
</dbReference>
<dbReference type="Gene3D" id="2.40.40.20">
    <property type="match status" value="1"/>
</dbReference>
<dbReference type="Gene3D" id="2.40.50.100">
    <property type="match status" value="2"/>
</dbReference>
<dbReference type="Gene3D" id="4.10.860.120">
    <property type="entry name" value="RNA polymerase II, clamp domain"/>
    <property type="match status" value="1"/>
</dbReference>
<dbReference type="Gene3D" id="1.10.274.100">
    <property type="entry name" value="RNA polymerase Rpb1, domain 3"/>
    <property type="match status" value="2"/>
</dbReference>
<dbReference type="HAMAP" id="MF_01322">
    <property type="entry name" value="RNApol_bact_RpoC"/>
    <property type="match status" value="1"/>
</dbReference>
<dbReference type="InterPro" id="IPR045867">
    <property type="entry name" value="DNA-dir_RpoC_beta_prime"/>
</dbReference>
<dbReference type="InterPro" id="IPR012754">
    <property type="entry name" value="DNA-dir_RpoC_beta_prime_bact"/>
</dbReference>
<dbReference type="InterPro" id="IPR000722">
    <property type="entry name" value="RNA_pol_asu"/>
</dbReference>
<dbReference type="InterPro" id="IPR006592">
    <property type="entry name" value="RNA_pol_N"/>
</dbReference>
<dbReference type="InterPro" id="IPR007080">
    <property type="entry name" value="RNA_pol_Rpb1_1"/>
</dbReference>
<dbReference type="InterPro" id="IPR007066">
    <property type="entry name" value="RNA_pol_Rpb1_3"/>
</dbReference>
<dbReference type="InterPro" id="IPR042102">
    <property type="entry name" value="RNA_pol_Rpb1_3_sf"/>
</dbReference>
<dbReference type="InterPro" id="IPR007083">
    <property type="entry name" value="RNA_pol_Rpb1_4"/>
</dbReference>
<dbReference type="InterPro" id="IPR007081">
    <property type="entry name" value="RNA_pol_Rpb1_5"/>
</dbReference>
<dbReference type="InterPro" id="IPR044893">
    <property type="entry name" value="RNA_pol_Rpb1_clamp_domain"/>
</dbReference>
<dbReference type="InterPro" id="IPR038120">
    <property type="entry name" value="Rpb1_funnel_sf"/>
</dbReference>
<dbReference type="NCBIfam" id="TIGR02386">
    <property type="entry name" value="rpoC_TIGR"/>
    <property type="match status" value="1"/>
</dbReference>
<dbReference type="PANTHER" id="PTHR19376">
    <property type="entry name" value="DNA-DIRECTED RNA POLYMERASE"/>
    <property type="match status" value="1"/>
</dbReference>
<dbReference type="PANTHER" id="PTHR19376:SF54">
    <property type="entry name" value="DNA-DIRECTED RNA POLYMERASE SUBUNIT BETA"/>
    <property type="match status" value="1"/>
</dbReference>
<dbReference type="Pfam" id="PF04997">
    <property type="entry name" value="RNA_pol_Rpb1_1"/>
    <property type="match status" value="2"/>
</dbReference>
<dbReference type="Pfam" id="PF00623">
    <property type="entry name" value="RNA_pol_Rpb1_2"/>
    <property type="match status" value="1"/>
</dbReference>
<dbReference type="Pfam" id="PF04983">
    <property type="entry name" value="RNA_pol_Rpb1_3"/>
    <property type="match status" value="1"/>
</dbReference>
<dbReference type="Pfam" id="PF05000">
    <property type="entry name" value="RNA_pol_Rpb1_4"/>
    <property type="match status" value="1"/>
</dbReference>
<dbReference type="Pfam" id="PF04998">
    <property type="entry name" value="RNA_pol_Rpb1_5"/>
    <property type="match status" value="1"/>
</dbReference>
<dbReference type="SMART" id="SM00663">
    <property type="entry name" value="RPOLA_N"/>
    <property type="match status" value="1"/>
</dbReference>
<dbReference type="SUPFAM" id="SSF64484">
    <property type="entry name" value="beta and beta-prime subunits of DNA dependent RNA-polymerase"/>
    <property type="match status" value="1"/>
</dbReference>
<feature type="chain" id="PRO_1000165839" description="DNA-directed RNA polymerase subunit beta'">
    <location>
        <begin position="1"/>
        <end position="1503"/>
    </location>
</feature>
<feature type="region of interest" description="Disordered" evidence="2">
    <location>
        <begin position="1439"/>
        <end position="1503"/>
    </location>
</feature>
<feature type="compositionally biased region" description="Acidic residues" evidence="2">
    <location>
        <begin position="1486"/>
        <end position="1503"/>
    </location>
</feature>
<feature type="binding site" evidence="1">
    <location>
        <position position="60"/>
    </location>
    <ligand>
        <name>Zn(2+)</name>
        <dbReference type="ChEBI" id="CHEBI:29105"/>
        <label>1</label>
    </ligand>
</feature>
<feature type="binding site" evidence="1">
    <location>
        <position position="62"/>
    </location>
    <ligand>
        <name>Zn(2+)</name>
        <dbReference type="ChEBI" id="CHEBI:29105"/>
        <label>1</label>
    </ligand>
</feature>
<feature type="binding site" evidence="1">
    <location>
        <position position="75"/>
    </location>
    <ligand>
        <name>Zn(2+)</name>
        <dbReference type="ChEBI" id="CHEBI:29105"/>
        <label>1</label>
    </ligand>
</feature>
<feature type="binding site" evidence="1">
    <location>
        <position position="78"/>
    </location>
    <ligand>
        <name>Zn(2+)</name>
        <dbReference type="ChEBI" id="CHEBI:29105"/>
        <label>1</label>
    </ligand>
</feature>
<feature type="binding site" evidence="1">
    <location>
        <position position="626"/>
    </location>
    <ligand>
        <name>Mg(2+)</name>
        <dbReference type="ChEBI" id="CHEBI:18420"/>
    </ligand>
</feature>
<feature type="binding site" evidence="1">
    <location>
        <position position="628"/>
    </location>
    <ligand>
        <name>Mg(2+)</name>
        <dbReference type="ChEBI" id="CHEBI:18420"/>
    </ligand>
</feature>
<feature type="binding site" evidence="1">
    <location>
        <position position="630"/>
    </location>
    <ligand>
        <name>Mg(2+)</name>
        <dbReference type="ChEBI" id="CHEBI:18420"/>
    </ligand>
</feature>
<feature type="binding site" evidence="1">
    <location>
        <position position="1002"/>
    </location>
    <ligand>
        <name>Zn(2+)</name>
        <dbReference type="ChEBI" id="CHEBI:29105"/>
        <label>2</label>
    </ligand>
</feature>
<feature type="binding site" evidence="1">
    <location>
        <position position="1075"/>
    </location>
    <ligand>
        <name>Zn(2+)</name>
        <dbReference type="ChEBI" id="CHEBI:29105"/>
        <label>2</label>
    </ligand>
</feature>
<feature type="binding site" evidence="1">
    <location>
        <position position="1082"/>
    </location>
    <ligand>
        <name>Zn(2+)</name>
        <dbReference type="ChEBI" id="CHEBI:29105"/>
        <label>2</label>
    </ligand>
</feature>
<feature type="binding site" evidence="1">
    <location>
        <position position="1085"/>
    </location>
    <ligand>
        <name>Zn(2+)</name>
        <dbReference type="ChEBI" id="CHEBI:29105"/>
        <label>2</label>
    </ligand>
</feature>
<evidence type="ECO:0000255" key="1">
    <source>
        <dbReference type="HAMAP-Rule" id="MF_01322"/>
    </source>
</evidence>
<evidence type="ECO:0000256" key="2">
    <source>
        <dbReference type="SAM" id="MobiDB-lite"/>
    </source>
</evidence>
<reference key="1">
    <citation type="submission" date="2009-01" db="EMBL/GenBank/DDBJ databases">
        <title>Complete sequence of Chloroflexus sp. Y-400-fl.</title>
        <authorList>
            <consortium name="US DOE Joint Genome Institute"/>
            <person name="Lucas S."/>
            <person name="Copeland A."/>
            <person name="Lapidus A."/>
            <person name="Glavina del Rio T."/>
            <person name="Dalin E."/>
            <person name="Tice H."/>
            <person name="Bruce D."/>
            <person name="Goodwin L."/>
            <person name="Pitluck S."/>
            <person name="Sims D."/>
            <person name="Kiss H."/>
            <person name="Brettin T."/>
            <person name="Detter J.C."/>
            <person name="Han C."/>
            <person name="Larimer F."/>
            <person name="Land M."/>
            <person name="Hauser L."/>
            <person name="Kyrpides N."/>
            <person name="Ovchinnikova G."/>
            <person name="Bryant D.A."/>
            <person name="Richardson P."/>
        </authorList>
    </citation>
    <scope>NUCLEOTIDE SEQUENCE [LARGE SCALE GENOMIC DNA]</scope>
    <source>
        <strain>ATCC 29364 / DSM 637 / Y-400-fl</strain>
    </source>
</reference>
<protein>
    <recommendedName>
        <fullName evidence="1">DNA-directed RNA polymerase subunit beta'</fullName>
        <shortName evidence="1">RNAP subunit beta'</shortName>
        <ecNumber evidence="1">2.7.7.6</ecNumber>
    </recommendedName>
    <alternativeName>
        <fullName evidence="1">RNA polymerase subunit beta'</fullName>
    </alternativeName>
    <alternativeName>
        <fullName evidence="1">Transcriptase subunit beta'</fullName>
    </alternativeName>
</protein>
<gene>
    <name evidence="1" type="primary">rpoC</name>
    <name type="ordered locus">Chy400_0948</name>
</gene>